<gene>
    <name type="primary">UQCRFS1</name>
</gene>
<proteinExistence type="inferred from homology"/>
<sequence length="274" mass="29638">MLSVAARSGPFAPVLSATSRGVAGALRPLVQATVPATPEQPVLDLKRPFLSRESLSGQAVRRPLVASVGLNVPASVCYSHTDVKVPDFSEYRRLEVLDSTKSSRESSEARKGFSYLVTGVTTVGVAYAAKNAVTQFVSSMSASADVLALAKIEIKLSDIPEGKNMAFKWRGKPLFVRHRTQKEIEQEAAVELSQLRDPQHDLDRVKKPEWVILIGVCTHLGCVPIANAGDFGGYYCPCHGSHYDASGRIRLGPAPLNLEVPTYEFTSDDMVIVG</sequence>
<evidence type="ECO:0000250" key="1">
    <source>
        <dbReference type="UniProtKB" id="P08067"/>
    </source>
</evidence>
<evidence type="ECO:0000250" key="2">
    <source>
        <dbReference type="UniProtKB" id="P13272"/>
    </source>
</evidence>
<evidence type="ECO:0000250" key="3">
    <source>
        <dbReference type="UniProtKB" id="P47985"/>
    </source>
</evidence>
<evidence type="ECO:0000250" key="4">
    <source>
        <dbReference type="UniProtKB" id="Q5ZLR5"/>
    </source>
</evidence>
<evidence type="ECO:0000250" key="5">
    <source>
        <dbReference type="UniProtKB" id="Q9CR68"/>
    </source>
</evidence>
<evidence type="ECO:0000255" key="6">
    <source>
        <dbReference type="PROSITE-ProRule" id="PRU00628"/>
    </source>
</evidence>
<evidence type="ECO:0000305" key="7"/>
<dbReference type="EC" id="7.1.1.8"/>
<dbReference type="EMBL" id="AY387496">
    <property type="protein sequence ID" value="AAR32726.1"/>
    <property type="molecule type" value="Genomic_DNA"/>
</dbReference>
<dbReference type="EMBL" id="AY387495">
    <property type="protein sequence ID" value="AAR32726.1"/>
    <property type="status" value="JOINED"/>
    <property type="molecule type" value="Genomic_DNA"/>
</dbReference>
<dbReference type="SMR" id="Q69BK6"/>
<dbReference type="STRING" id="9597.ENSPPAP00000013526"/>
<dbReference type="Ensembl" id="ENSPPAT00000036198.1">
    <property type="protein sequence ID" value="ENSPPAP00000013526.1"/>
    <property type="gene ID" value="ENSPPAG00000029945.1"/>
</dbReference>
<dbReference type="GeneID" id="100974890"/>
<dbReference type="KEGG" id="pps:100974890"/>
<dbReference type="eggNOG" id="KOG1671">
    <property type="taxonomic scope" value="Eukaryota"/>
</dbReference>
<dbReference type="GeneTree" id="ENSGT00390000001014"/>
<dbReference type="OMA" id="PPYDFND"/>
<dbReference type="OrthoDB" id="5587at9604"/>
<dbReference type="Proteomes" id="UP000240080">
    <property type="component" value="Chromosome 19"/>
</dbReference>
<dbReference type="Bgee" id="ENSPPAG00000029945">
    <property type="expression patterns" value="Expressed in adult mammalian kidney and 6 other cell types or tissues"/>
</dbReference>
<dbReference type="GO" id="GO:0005743">
    <property type="term" value="C:mitochondrial inner membrane"/>
    <property type="evidence" value="ECO:0007669"/>
    <property type="project" value="UniProtKB-SubCell"/>
</dbReference>
<dbReference type="GO" id="GO:0005739">
    <property type="term" value="C:mitochondrion"/>
    <property type="evidence" value="ECO:0000250"/>
    <property type="project" value="UniProtKB"/>
</dbReference>
<dbReference type="GO" id="GO:0045275">
    <property type="term" value="C:respiratory chain complex III"/>
    <property type="evidence" value="ECO:0007669"/>
    <property type="project" value="Ensembl"/>
</dbReference>
<dbReference type="GO" id="GO:0051537">
    <property type="term" value="F:2 iron, 2 sulfur cluster binding"/>
    <property type="evidence" value="ECO:0007669"/>
    <property type="project" value="UniProtKB-KW"/>
</dbReference>
<dbReference type="GO" id="GO:0046872">
    <property type="term" value="F:metal ion binding"/>
    <property type="evidence" value="ECO:0007669"/>
    <property type="project" value="UniProtKB-KW"/>
</dbReference>
<dbReference type="GO" id="GO:0008121">
    <property type="term" value="F:ubiquinol-cytochrome-c reductase activity"/>
    <property type="evidence" value="ECO:0007669"/>
    <property type="project" value="UniProtKB-EC"/>
</dbReference>
<dbReference type="GO" id="GO:0034551">
    <property type="term" value="P:mitochondrial respiratory chain complex III assembly"/>
    <property type="evidence" value="ECO:0007669"/>
    <property type="project" value="Ensembl"/>
</dbReference>
<dbReference type="GO" id="GO:0022904">
    <property type="term" value="P:respiratory electron transport chain"/>
    <property type="evidence" value="ECO:0000250"/>
    <property type="project" value="UniProtKB"/>
</dbReference>
<dbReference type="CDD" id="cd03470">
    <property type="entry name" value="Rieske_cytochrome_bc1"/>
    <property type="match status" value="1"/>
</dbReference>
<dbReference type="FunFam" id="1.20.5.270:FF:000001">
    <property type="entry name" value="Cytochrome b-c1 complex subunit Rieske, mitochondrial"/>
    <property type="match status" value="1"/>
</dbReference>
<dbReference type="FunFam" id="2.10.210.10:FF:000001">
    <property type="entry name" value="Cytochrome b-c1 complex subunit Rieske, mitochondrial"/>
    <property type="match status" value="1"/>
</dbReference>
<dbReference type="FunFam" id="2.102.10.10:FF:000001">
    <property type="entry name" value="Cytochrome b-c1 complex subunit Rieske, mitochondrial"/>
    <property type="match status" value="1"/>
</dbReference>
<dbReference type="Gene3D" id="2.10.210.10">
    <property type="entry name" value="Cytochrome Bc1 Complex, Chain I"/>
    <property type="match status" value="1"/>
</dbReference>
<dbReference type="Gene3D" id="2.102.10.10">
    <property type="entry name" value="Rieske [2Fe-2S] iron-sulphur domain"/>
    <property type="match status" value="1"/>
</dbReference>
<dbReference type="Gene3D" id="1.20.5.270">
    <property type="entry name" value="Ubiquinol cytochrome reductase, transmembrane domain"/>
    <property type="match status" value="1"/>
</dbReference>
<dbReference type="InterPro" id="IPR037008">
    <property type="entry name" value="bc1_Rieske_TM_sf"/>
</dbReference>
<dbReference type="InterPro" id="IPR011070">
    <property type="entry name" value="Globular_prot_asu/bsu"/>
</dbReference>
<dbReference type="InterPro" id="IPR017941">
    <property type="entry name" value="Rieske_2Fe-2S"/>
</dbReference>
<dbReference type="InterPro" id="IPR036922">
    <property type="entry name" value="Rieske_2Fe-2S_sf"/>
</dbReference>
<dbReference type="InterPro" id="IPR014349">
    <property type="entry name" value="Rieske_Fe-S_prot"/>
</dbReference>
<dbReference type="InterPro" id="IPR005805">
    <property type="entry name" value="Rieske_Fe-S_prot_C"/>
</dbReference>
<dbReference type="InterPro" id="IPR004192">
    <property type="entry name" value="Rieske_TM"/>
</dbReference>
<dbReference type="InterPro" id="IPR006317">
    <property type="entry name" value="Ubiquinol_cyt_c_Rdtase_Fe-S-su"/>
</dbReference>
<dbReference type="InterPro" id="IPR015248">
    <property type="entry name" value="UQCRFS1_N"/>
</dbReference>
<dbReference type="NCBIfam" id="TIGR01416">
    <property type="entry name" value="Rieske_proteo"/>
    <property type="match status" value="1"/>
</dbReference>
<dbReference type="PANTHER" id="PTHR10134">
    <property type="entry name" value="CYTOCHROME B-C1 COMPLEX SUBUNIT RIESKE, MITOCHONDRIAL"/>
    <property type="match status" value="1"/>
</dbReference>
<dbReference type="Pfam" id="PF00355">
    <property type="entry name" value="Rieske"/>
    <property type="match status" value="1"/>
</dbReference>
<dbReference type="Pfam" id="PF09165">
    <property type="entry name" value="Ubiq-Cytc-red_N"/>
    <property type="match status" value="1"/>
</dbReference>
<dbReference type="Pfam" id="PF02921">
    <property type="entry name" value="UCR_TM"/>
    <property type="match status" value="1"/>
</dbReference>
<dbReference type="PRINTS" id="PR00162">
    <property type="entry name" value="RIESKE"/>
</dbReference>
<dbReference type="SUPFAM" id="SSF50022">
    <property type="entry name" value="ISP domain"/>
    <property type="match status" value="1"/>
</dbReference>
<dbReference type="SUPFAM" id="SSF81502">
    <property type="entry name" value="ISP transmembrane anchor"/>
    <property type="match status" value="1"/>
</dbReference>
<dbReference type="SUPFAM" id="SSF56568">
    <property type="entry name" value="Non-globular alpha+beta subunits of globular proteins"/>
    <property type="match status" value="1"/>
</dbReference>
<dbReference type="PROSITE" id="PS51296">
    <property type="entry name" value="RIESKE"/>
    <property type="match status" value="1"/>
</dbReference>
<protein>
    <recommendedName>
        <fullName>Cytochrome b-c1 complex subunit Rieske, mitochondrial</fullName>
        <ecNumber>7.1.1.8</ecNumber>
    </recommendedName>
    <alternativeName>
        <fullName>Complex III subunit 5</fullName>
    </alternativeName>
    <alternativeName>
        <fullName>Cytochrome b-c1 complex subunit 5</fullName>
    </alternativeName>
    <alternativeName>
        <fullName>Rieske iron-sulfur protein</fullName>
        <shortName>RISP</shortName>
    </alternativeName>
    <alternativeName>
        <fullName>Rieske protein UQCRFS1</fullName>
    </alternativeName>
    <alternativeName>
        <fullName>Ubiquinol-cytochrome c reductase iron-sulfur subunit</fullName>
    </alternativeName>
    <component>
        <recommendedName>
            <fullName evidence="2">Cytochrome b-c1 complex subunit 9</fullName>
            <shortName evidence="2">Su9</shortName>
            <shortName evidence="2">Subunit 9</shortName>
        </recommendedName>
        <alternativeName>
            <fullName evidence="2">8 kDa subunit 9</fullName>
        </alternativeName>
        <alternativeName>
            <fullName>Complex III subunit IX</fullName>
        </alternativeName>
        <alternativeName>
            <fullName>Cytochrome b-c1 complex subunit 11</fullName>
        </alternativeName>
        <alternativeName>
            <fullName>UQCRFS1 mitochondrial targeting sequence</fullName>
            <shortName>UQCRFS1 MTS</shortName>
        </alternativeName>
        <alternativeName>
            <fullName evidence="2">Ubiquinol-cytochrome c reductase 8 kDa protein</fullName>
        </alternativeName>
    </component>
</protein>
<keyword id="KW-0001">2Fe-2S</keyword>
<keyword id="KW-1015">Disulfide bond</keyword>
<keyword id="KW-0249">Electron transport</keyword>
<keyword id="KW-0408">Iron</keyword>
<keyword id="KW-0411">Iron-sulfur</keyword>
<keyword id="KW-0472">Membrane</keyword>
<keyword id="KW-0479">Metal-binding</keyword>
<keyword id="KW-0496">Mitochondrion</keyword>
<keyword id="KW-0999">Mitochondrion inner membrane</keyword>
<keyword id="KW-1185">Reference proteome</keyword>
<keyword id="KW-0679">Respiratory chain</keyword>
<keyword id="KW-0809">Transit peptide</keyword>
<keyword id="KW-1278">Translocase</keyword>
<keyword id="KW-0812">Transmembrane</keyword>
<keyword id="KW-1133">Transmembrane helix</keyword>
<keyword id="KW-0813">Transport</keyword>
<organism>
    <name type="scientific">Pan paniscus</name>
    <name type="common">Pygmy chimpanzee</name>
    <name type="synonym">Bonobo</name>
    <dbReference type="NCBI Taxonomy" id="9597"/>
    <lineage>
        <taxon>Eukaryota</taxon>
        <taxon>Metazoa</taxon>
        <taxon>Chordata</taxon>
        <taxon>Craniata</taxon>
        <taxon>Vertebrata</taxon>
        <taxon>Euteleostomi</taxon>
        <taxon>Mammalia</taxon>
        <taxon>Eutheria</taxon>
        <taxon>Euarchontoglires</taxon>
        <taxon>Primates</taxon>
        <taxon>Haplorrhini</taxon>
        <taxon>Catarrhini</taxon>
        <taxon>Hominidae</taxon>
        <taxon>Pan</taxon>
    </lineage>
</organism>
<name>UCRI_PANPA</name>
<feature type="chain" id="PRO_0000307245" description="Cytochrome b-c1 complex subunit 9" evidence="5">
    <location>
        <begin position="1"/>
        <end position="78"/>
    </location>
</feature>
<feature type="chain" id="PRO_0000030668" description="Cytochrome b-c1 complex subunit Rieske, mitochondrial">
    <location>
        <begin position="79"/>
        <end position="274"/>
    </location>
</feature>
<feature type="topological domain" description="Mitochondrial matrix" evidence="2">
    <location>
        <begin position="79"/>
        <end position="103"/>
    </location>
</feature>
<feature type="transmembrane region" description="Helical" evidence="2">
    <location>
        <begin position="104"/>
        <end position="140"/>
    </location>
</feature>
<feature type="topological domain" description="Mitochondrial intermembrane" evidence="2">
    <location>
        <begin position="141"/>
        <end position="274"/>
    </location>
</feature>
<feature type="domain" description="Rieske" evidence="6">
    <location>
        <begin position="187"/>
        <end position="272"/>
    </location>
</feature>
<feature type="binding site" evidence="2">
    <location>
        <position position="217"/>
    </location>
    <ligand>
        <name>[2Fe-2S] cluster</name>
        <dbReference type="ChEBI" id="CHEBI:190135"/>
    </ligand>
</feature>
<feature type="binding site" evidence="2">
    <location>
        <position position="219"/>
    </location>
    <ligand>
        <name>[2Fe-2S] cluster</name>
        <dbReference type="ChEBI" id="CHEBI:190135"/>
    </ligand>
</feature>
<feature type="binding site" evidence="2">
    <location>
        <position position="236"/>
    </location>
    <ligand>
        <name>[2Fe-2S] cluster</name>
        <dbReference type="ChEBI" id="CHEBI:190135"/>
    </ligand>
</feature>
<feature type="binding site" evidence="2">
    <location>
        <position position="239"/>
    </location>
    <ligand>
        <name>[2Fe-2S] cluster</name>
        <dbReference type="ChEBI" id="CHEBI:190135"/>
    </ligand>
</feature>
<feature type="binding site" evidence="2">
    <location>
        <position position="241"/>
    </location>
    <ligand>
        <name>[2Fe-2S] cluster</name>
        <dbReference type="ChEBI" id="CHEBI:190135"/>
    </ligand>
</feature>
<feature type="disulfide bond" evidence="2">
    <location>
        <begin position="222"/>
        <end position="238"/>
    </location>
</feature>
<comment type="function">
    <molecule>Cytochrome b-c1 complex subunit Rieske, mitochondrial</molecule>
    <text evidence="1 3">Component of the ubiquinol-cytochrome c oxidoreductase, a multisubunit transmembrane complex that is part of the mitochondrial electron transport chain which drives oxidative phosphorylation. The respiratory chain contains 3 multisubunit complexes succinate dehydrogenase (complex II, CII), ubiquinol-cytochrome c oxidoreductase (cytochrome b-c1 complex, complex III, CIII) and cytochrome c oxidase (complex IV, CIV), that cooperate to transfer electrons derived from NADH and succinate to molecular oxygen, creating an electrochemical gradient over the inner membrane that drives transmembrane transport and the ATP synthase. The cytochrome b-c1 complex catalyzes electron transfer from ubiquinol to cytochrome c, linking this redox reaction to translocation of protons across the mitochondrial inner membrane, with protons being carried across the membrane as hydrogens on the quinol. In the process called Q cycle, 2 protons are consumed from the matrix, 4 protons are released into the intermembrane space and 2 electrons are passed to cytochrome c. The Rieske protein is a catalytic core subunit containing a [2Fe-2S] iron-sulfur cluster. It cycles between 2 conformational states during catalysis to transfer electrons from the quinol bound in the Q(0) site in cytochrome b to cytochrome c1 (By similarity). Incorporation of UQCRFS1 is the penultimate step in complex III assembly (By similarity).</text>
</comment>
<comment type="function">
    <molecule>Cytochrome b-c1 complex subunit 9</molecule>
    <text evidence="2 3 5">Component of the ubiquinol-cytochrome c oxidoreductase (cytochrome b-c1 complex, complex III, CIII). UQCRFS1 undergoes proteolytic processing once it is incorporated in the complex III dimer. One of the fragments, called subunit 9, corresponds to its mitochondrial targeting sequence (MTS) (By similarity). The proteolytic processing is necessary for the correct insertion of UQCRFS1 in the complex III dimer, but the persistence of UQCRFS1-derived fragments may prevent newly imported UQCRFS1 to be processed and assembled into complex III and is detrimental for the complex III structure and function (By similarity).</text>
</comment>
<comment type="catalytic activity">
    <reaction evidence="1">
        <text>a quinol + 2 Fe(III)-[cytochrome c](out) = a quinone + 2 Fe(II)-[cytochrome c](out) + 2 H(+)(out)</text>
        <dbReference type="Rhea" id="RHEA:11484"/>
        <dbReference type="Rhea" id="RHEA-COMP:10350"/>
        <dbReference type="Rhea" id="RHEA-COMP:14399"/>
        <dbReference type="ChEBI" id="CHEBI:15378"/>
        <dbReference type="ChEBI" id="CHEBI:24646"/>
        <dbReference type="ChEBI" id="CHEBI:29033"/>
        <dbReference type="ChEBI" id="CHEBI:29034"/>
        <dbReference type="ChEBI" id="CHEBI:132124"/>
        <dbReference type="EC" id="7.1.1.8"/>
    </reaction>
</comment>
<comment type="cofactor">
    <cofactor evidence="6">
        <name>[2Fe-2S] cluster</name>
        <dbReference type="ChEBI" id="CHEBI:190135"/>
    </cofactor>
    <text evidence="3 6">Binds 1 [2Fe-2S] cluster per subunit. Fe-S cluster delivery to the Rieske protein is mediated by components of the iron sulfur (Fe-S) cluster assembly machinery that reside in the mitochondrial matrix (including HSC20 and LYRM7) (By similarity).</text>
</comment>
<comment type="subunit">
    <molecule>Cytochrome b-c1 complex subunit Rieske, mitochondrial</molecule>
    <text evidence="2 3">Component of the ubiquinol-cytochrome c oxidoreductase (cytochrome b-c1 complex, complex III, CIII), a multisubunit enzyme composed of 11 subunits. The complex is composed of 3 respiratory subunits cytochrome b, cytochrome c1 and Rieske protein UQCRFS1, 2 core protein subunits UQCRC1/QCR1 and UQCRC2/QCR2, and 6 low-molecular weight protein subunits UQCRH/QCR6, UQCRB/QCR7, UQCRQ/QCR8, UQCR10/QCR9, UQCR11/QCR10 and subunit 9, the cleavage product of Rieske protein UQCRFS1. The complex exists as an obligatory dimer and forms supercomplexes (SCs) in the inner mitochondrial membrane with NADH-ubiquinone oxidoreductase (complex I, CI) and cytochrome c oxidase (complex IV, CIV), resulting in different assemblies (supercomplex SCI(1)III(2)IV(1) and megacomplex MCI(2)III(2)IV(2)) (By similarity). Incorporation of the Rieske protein UQCRFS1 is the penultimate step in complex III assembly. Interacts with TTC19, which is involved in the clearance of UQCRFS1 fragments (By similarity).</text>
</comment>
<comment type="subunit">
    <molecule>Cytochrome b-c1 complex subunit 9</molecule>
    <text evidence="2">Component of the ubiquinol-cytochrome c oxidoreductase (cytochrome b-c1 complex, complex III, CIII). Subunit 9 corresponds to the mitochondrial targeting sequence (MTS) of Rieske protein UQCRFS1. It is retained after processing and incorporated inside complex III, where it remains bound to the complex and localizes between the 2 core subunits UQCRC1/QCR1 and UQCRC2/QCR2.</text>
</comment>
<comment type="subcellular location">
    <subcellularLocation>
        <location evidence="4">Mitochondrion inner membrane</location>
        <topology evidence="4">Single-pass membrane protein</topology>
    </subcellularLocation>
</comment>
<comment type="PTM">
    <text evidence="5">Proteolytic processing is necessary for the correct insertion of UQCRFS1 in the complex III dimer. Several fragments are generated during UQCRFS1 insertion, most probably due to the endogenous matrix-processing peptidase (MPP) activity of the 2 core protein subunits UQCRC1/QCR1 and UQCRC2/QCR2, which are homologous to the 2 mitochondrial-processing peptidase (MPP) subunits beta-MPP and alpha-MPP respectively. The action of the protease is also necessary for the clearance of the UQCRFS1 fragments.</text>
</comment>
<comment type="miscellaneous">
    <text>The Rieske protein is a high potential 2Fe-2S protein.</text>
</comment>
<comment type="similarity">
    <text evidence="7">Belongs to the Rieske iron-sulfur protein family.</text>
</comment>
<comment type="caution">
    <text evidence="2 3">Several peptides are generated during UQCRFS1 insertion. According to some authors, the identification of the transit peptide as the subunit 9, does not necessary imply that it must be considered as a structural subunit of the complex III dimer as additional fragments from UQCRFS1 are also present.</text>
</comment>
<accession>Q69BK6</accession>
<reference key="1">
    <citation type="submission" date="2003-08" db="EMBL/GenBank/DDBJ databases">
        <title>Molecular evolution of the iron sulfur protein and subunit 9 of complex III of the electron transport chain in primates.</title>
        <authorList>
            <person name="Doan J.W."/>
            <person name="Wildman D.E."/>
            <person name="Schmidt T.R."/>
            <person name="Weiss M.L."/>
            <person name="Goodman M."/>
            <person name="Grossman L.I."/>
        </authorList>
    </citation>
    <scope>NUCLEOTIDE SEQUENCE [GENOMIC DNA]</scope>
</reference>